<organism>
    <name type="scientific">Shigella boydii serotype 4 (strain Sb227)</name>
    <dbReference type="NCBI Taxonomy" id="300268"/>
    <lineage>
        <taxon>Bacteria</taxon>
        <taxon>Pseudomonadati</taxon>
        <taxon>Pseudomonadota</taxon>
        <taxon>Gammaproteobacteria</taxon>
        <taxon>Enterobacterales</taxon>
        <taxon>Enterobacteriaceae</taxon>
        <taxon>Shigella</taxon>
    </lineage>
</organism>
<reference key="1">
    <citation type="journal article" date="2005" name="Nucleic Acids Res.">
        <title>Genome dynamics and diversity of Shigella species, the etiologic agents of bacillary dysentery.</title>
        <authorList>
            <person name="Yang F."/>
            <person name="Yang J."/>
            <person name="Zhang X."/>
            <person name="Chen L."/>
            <person name="Jiang Y."/>
            <person name="Yan Y."/>
            <person name="Tang X."/>
            <person name="Wang J."/>
            <person name="Xiong Z."/>
            <person name="Dong J."/>
            <person name="Xue Y."/>
            <person name="Zhu Y."/>
            <person name="Xu X."/>
            <person name="Sun L."/>
            <person name="Chen S."/>
            <person name="Nie H."/>
            <person name="Peng J."/>
            <person name="Xu J."/>
            <person name="Wang Y."/>
            <person name="Yuan Z."/>
            <person name="Wen Y."/>
            <person name="Yao Z."/>
            <person name="Shen Y."/>
            <person name="Qiang B."/>
            <person name="Hou Y."/>
            <person name="Yu J."/>
            <person name="Jin Q."/>
        </authorList>
    </citation>
    <scope>NUCLEOTIDE SEQUENCE [LARGE SCALE GENOMIC DNA]</scope>
    <source>
        <strain>Sb227</strain>
    </source>
</reference>
<name>ASTE_SHIBS</name>
<gene>
    <name evidence="1" type="primary">astE</name>
    <name type="ordered locus">SBO_1346</name>
</gene>
<dbReference type="EC" id="3.5.1.96" evidence="1"/>
<dbReference type="EMBL" id="CP000036">
    <property type="protein sequence ID" value="ABB65972.1"/>
    <property type="molecule type" value="Genomic_DNA"/>
</dbReference>
<dbReference type="RefSeq" id="WP_000368511.1">
    <property type="nucleotide sequence ID" value="NC_007613.1"/>
</dbReference>
<dbReference type="SMR" id="Q321N6"/>
<dbReference type="KEGG" id="sbo:SBO_1346"/>
<dbReference type="HOGENOM" id="CLU_071608_0_0_6"/>
<dbReference type="UniPathway" id="UPA00185">
    <property type="reaction ID" value="UER00283"/>
</dbReference>
<dbReference type="Proteomes" id="UP000007067">
    <property type="component" value="Chromosome"/>
</dbReference>
<dbReference type="GO" id="GO:0016788">
    <property type="term" value="F:hydrolase activity, acting on ester bonds"/>
    <property type="evidence" value="ECO:0007669"/>
    <property type="project" value="UniProtKB-UniRule"/>
</dbReference>
<dbReference type="GO" id="GO:0009017">
    <property type="term" value="F:succinylglutamate desuccinylase activity"/>
    <property type="evidence" value="ECO:0007669"/>
    <property type="project" value="UniProtKB-EC"/>
</dbReference>
<dbReference type="GO" id="GO:0008270">
    <property type="term" value="F:zinc ion binding"/>
    <property type="evidence" value="ECO:0007669"/>
    <property type="project" value="UniProtKB-UniRule"/>
</dbReference>
<dbReference type="GO" id="GO:0019544">
    <property type="term" value="P:arginine catabolic process to glutamate"/>
    <property type="evidence" value="ECO:0007669"/>
    <property type="project" value="UniProtKB-UniRule"/>
</dbReference>
<dbReference type="GO" id="GO:0019545">
    <property type="term" value="P:arginine catabolic process to succinate"/>
    <property type="evidence" value="ECO:0007669"/>
    <property type="project" value="UniProtKB-UniRule"/>
</dbReference>
<dbReference type="CDD" id="cd03855">
    <property type="entry name" value="M14_ASTE"/>
    <property type="match status" value="1"/>
</dbReference>
<dbReference type="FunFam" id="3.40.630.10:FF:000017">
    <property type="entry name" value="Succinylglutamate desuccinylase"/>
    <property type="match status" value="1"/>
</dbReference>
<dbReference type="Gene3D" id="3.40.630.10">
    <property type="entry name" value="Zn peptidases"/>
    <property type="match status" value="1"/>
</dbReference>
<dbReference type="HAMAP" id="MF_00767">
    <property type="entry name" value="Arg_catab_AstE"/>
    <property type="match status" value="1"/>
</dbReference>
<dbReference type="InterPro" id="IPR050178">
    <property type="entry name" value="AspA/AstE_fam"/>
</dbReference>
<dbReference type="InterPro" id="IPR055438">
    <property type="entry name" value="AstE_AspA_cat"/>
</dbReference>
<dbReference type="InterPro" id="IPR007036">
    <property type="entry name" value="Aste_AspA_hybrid_dom"/>
</dbReference>
<dbReference type="InterPro" id="IPR016681">
    <property type="entry name" value="SuccinylGlu_desuccinylase"/>
</dbReference>
<dbReference type="NCBIfam" id="TIGR03242">
    <property type="entry name" value="arg_catab_astE"/>
    <property type="match status" value="1"/>
</dbReference>
<dbReference type="NCBIfam" id="NF003706">
    <property type="entry name" value="PRK05324.1"/>
    <property type="match status" value="1"/>
</dbReference>
<dbReference type="PANTHER" id="PTHR15162">
    <property type="entry name" value="ASPARTOACYLASE"/>
    <property type="match status" value="1"/>
</dbReference>
<dbReference type="PANTHER" id="PTHR15162:SF7">
    <property type="entry name" value="SUCCINYLGLUTAMATE DESUCCINYLASE"/>
    <property type="match status" value="1"/>
</dbReference>
<dbReference type="Pfam" id="PF24827">
    <property type="entry name" value="AstE_AspA_cat"/>
    <property type="match status" value="1"/>
</dbReference>
<dbReference type="Pfam" id="PF04952">
    <property type="entry name" value="AstE_AspA_hybrid"/>
    <property type="match status" value="1"/>
</dbReference>
<dbReference type="PIRSF" id="PIRSF017020">
    <property type="entry name" value="AstE"/>
    <property type="match status" value="1"/>
</dbReference>
<dbReference type="SUPFAM" id="SSF53187">
    <property type="entry name" value="Zn-dependent exopeptidases"/>
    <property type="match status" value="1"/>
</dbReference>
<protein>
    <recommendedName>
        <fullName evidence="1">Succinylglutamate desuccinylase</fullName>
        <ecNumber evidence="1">3.5.1.96</ecNumber>
    </recommendedName>
</protein>
<proteinExistence type="inferred from homology"/>
<evidence type="ECO:0000255" key="1">
    <source>
        <dbReference type="HAMAP-Rule" id="MF_00767"/>
    </source>
</evidence>
<keyword id="KW-0056">Arginine metabolism</keyword>
<keyword id="KW-0378">Hydrolase</keyword>
<keyword id="KW-0479">Metal-binding</keyword>
<keyword id="KW-0862">Zinc</keyword>
<feature type="chain" id="PRO_0000257721" description="Succinylglutamate desuccinylase">
    <location>
        <begin position="1"/>
        <end position="322"/>
    </location>
</feature>
<feature type="active site" evidence="1">
    <location>
        <position position="210"/>
    </location>
</feature>
<feature type="binding site" evidence="1">
    <location>
        <position position="53"/>
    </location>
    <ligand>
        <name>Zn(2+)</name>
        <dbReference type="ChEBI" id="CHEBI:29105"/>
    </ligand>
</feature>
<feature type="binding site" evidence="1">
    <location>
        <position position="56"/>
    </location>
    <ligand>
        <name>Zn(2+)</name>
        <dbReference type="ChEBI" id="CHEBI:29105"/>
    </ligand>
</feature>
<feature type="binding site" evidence="1">
    <location>
        <position position="147"/>
    </location>
    <ligand>
        <name>Zn(2+)</name>
        <dbReference type="ChEBI" id="CHEBI:29105"/>
    </ligand>
</feature>
<accession>Q321N6</accession>
<comment type="function">
    <text evidence="1">Transforms N(2)-succinylglutamate into succinate and glutamate.</text>
</comment>
<comment type="catalytic activity">
    <reaction evidence="1">
        <text>N-succinyl-L-glutamate + H2O = L-glutamate + succinate</text>
        <dbReference type="Rhea" id="RHEA:15169"/>
        <dbReference type="ChEBI" id="CHEBI:15377"/>
        <dbReference type="ChEBI" id="CHEBI:29985"/>
        <dbReference type="ChEBI" id="CHEBI:30031"/>
        <dbReference type="ChEBI" id="CHEBI:58763"/>
        <dbReference type="EC" id="3.5.1.96"/>
    </reaction>
</comment>
<comment type="cofactor">
    <cofactor evidence="1">
        <name>Zn(2+)</name>
        <dbReference type="ChEBI" id="CHEBI:29105"/>
    </cofactor>
    <text evidence="1">Binds 1 zinc ion per subunit.</text>
</comment>
<comment type="pathway">
    <text evidence="1">Amino-acid degradation; L-arginine degradation via AST pathway; L-glutamate and succinate from L-arginine: step 5/5.</text>
</comment>
<comment type="similarity">
    <text evidence="1">Belongs to the AspA/AstE family. Succinylglutamate desuccinylase subfamily.</text>
</comment>
<sequence>MDNFLALTLTGKKPVITEREINGVRWRWLGDGVLELTPLTPPQGALVISAGIHGNETAPVEMLDALLGAISHGEIPLRWRLLVILGNPPALKQGKRYCHSDMNRMFGGRWQLFAESGETCRARELEQCLEDFYDQGKESVRWHLDLHTAIRGSLHPQFGVLPQRDIPWDEKFLTWLGAAGLEALVFHQEPGGTFTHFSVRHFGALACTLELGKALPFGQNDLRQFAVTASAIAALLSGESVGIVRTPPLRYRVVSQITRHSPSFEMHMASDTLNFMPFEKGTLLAQDGEERFTVTHDVEYVLFPNPLVALGLRAGLMLEKIS</sequence>